<dbReference type="EMBL" id="CU234118">
    <property type="protein sequence ID" value="CAL76893.1"/>
    <property type="molecule type" value="Genomic_DNA"/>
</dbReference>
<dbReference type="RefSeq" id="WP_011926061.1">
    <property type="nucleotide sequence ID" value="NC_009445.1"/>
</dbReference>
<dbReference type="SMR" id="A4YSL7"/>
<dbReference type="STRING" id="114615.BRADO3091"/>
<dbReference type="KEGG" id="bra:BRADO3091"/>
<dbReference type="eggNOG" id="COG0203">
    <property type="taxonomic scope" value="Bacteria"/>
</dbReference>
<dbReference type="HOGENOM" id="CLU_074407_2_0_5"/>
<dbReference type="OrthoDB" id="9809073at2"/>
<dbReference type="Proteomes" id="UP000001994">
    <property type="component" value="Chromosome"/>
</dbReference>
<dbReference type="GO" id="GO:0022625">
    <property type="term" value="C:cytosolic large ribosomal subunit"/>
    <property type="evidence" value="ECO:0007669"/>
    <property type="project" value="TreeGrafter"/>
</dbReference>
<dbReference type="GO" id="GO:0003735">
    <property type="term" value="F:structural constituent of ribosome"/>
    <property type="evidence" value="ECO:0007669"/>
    <property type="project" value="InterPro"/>
</dbReference>
<dbReference type="GO" id="GO:0006412">
    <property type="term" value="P:translation"/>
    <property type="evidence" value="ECO:0007669"/>
    <property type="project" value="UniProtKB-UniRule"/>
</dbReference>
<dbReference type="FunFam" id="3.90.1030.10:FF:000001">
    <property type="entry name" value="50S ribosomal protein L17"/>
    <property type="match status" value="1"/>
</dbReference>
<dbReference type="Gene3D" id="3.90.1030.10">
    <property type="entry name" value="Ribosomal protein L17"/>
    <property type="match status" value="1"/>
</dbReference>
<dbReference type="HAMAP" id="MF_01368">
    <property type="entry name" value="Ribosomal_bL17"/>
    <property type="match status" value="1"/>
</dbReference>
<dbReference type="InterPro" id="IPR000456">
    <property type="entry name" value="Ribosomal_bL17"/>
</dbReference>
<dbReference type="InterPro" id="IPR047859">
    <property type="entry name" value="Ribosomal_bL17_CS"/>
</dbReference>
<dbReference type="InterPro" id="IPR036373">
    <property type="entry name" value="Ribosomal_bL17_sf"/>
</dbReference>
<dbReference type="NCBIfam" id="TIGR00059">
    <property type="entry name" value="L17"/>
    <property type="match status" value="1"/>
</dbReference>
<dbReference type="PANTHER" id="PTHR14413:SF16">
    <property type="entry name" value="LARGE RIBOSOMAL SUBUNIT PROTEIN BL17M"/>
    <property type="match status" value="1"/>
</dbReference>
<dbReference type="PANTHER" id="PTHR14413">
    <property type="entry name" value="RIBOSOMAL PROTEIN L17"/>
    <property type="match status" value="1"/>
</dbReference>
<dbReference type="Pfam" id="PF01196">
    <property type="entry name" value="Ribosomal_L17"/>
    <property type="match status" value="1"/>
</dbReference>
<dbReference type="SUPFAM" id="SSF64263">
    <property type="entry name" value="Prokaryotic ribosomal protein L17"/>
    <property type="match status" value="1"/>
</dbReference>
<dbReference type="PROSITE" id="PS01167">
    <property type="entry name" value="RIBOSOMAL_L17"/>
    <property type="match status" value="1"/>
</dbReference>
<keyword id="KW-1185">Reference proteome</keyword>
<keyword id="KW-0687">Ribonucleoprotein</keyword>
<keyword id="KW-0689">Ribosomal protein</keyword>
<reference key="1">
    <citation type="journal article" date="2007" name="Science">
        <title>Legumes symbioses: absence of nod genes in photosynthetic bradyrhizobia.</title>
        <authorList>
            <person name="Giraud E."/>
            <person name="Moulin L."/>
            <person name="Vallenet D."/>
            <person name="Barbe V."/>
            <person name="Cytryn E."/>
            <person name="Avarre J.-C."/>
            <person name="Jaubert M."/>
            <person name="Simon D."/>
            <person name="Cartieaux F."/>
            <person name="Prin Y."/>
            <person name="Bena G."/>
            <person name="Hannibal L."/>
            <person name="Fardoux J."/>
            <person name="Kojadinovic M."/>
            <person name="Vuillet L."/>
            <person name="Lajus A."/>
            <person name="Cruveiller S."/>
            <person name="Rouy Z."/>
            <person name="Mangenot S."/>
            <person name="Segurens B."/>
            <person name="Dossat C."/>
            <person name="Franck W.L."/>
            <person name="Chang W.-S."/>
            <person name="Saunders E."/>
            <person name="Bruce D."/>
            <person name="Richardson P."/>
            <person name="Normand P."/>
            <person name="Dreyfus B."/>
            <person name="Pignol D."/>
            <person name="Stacey G."/>
            <person name="Emerich D."/>
            <person name="Vermeglio A."/>
            <person name="Medigue C."/>
            <person name="Sadowsky M."/>
        </authorList>
    </citation>
    <scope>NUCLEOTIDE SEQUENCE [LARGE SCALE GENOMIC DNA]</scope>
    <source>
        <strain>ORS 278</strain>
    </source>
</reference>
<gene>
    <name evidence="1" type="primary">rplQ</name>
    <name type="ordered locus">BRADO3091</name>
</gene>
<sequence length="137" mass="15373">MRHGKVHRKLNRTAEHRKAMFANMCASLIKHEQIVTTLPKAKELRPIVEKLVTLGKKGGLALRRQAIAEMRDVDQVKKLFDVLAPRYKDRNGGYTRIIKAGFRYGDNAAMAVIEFVDRDVDAKGQDSGPVQETSEAA</sequence>
<evidence type="ECO:0000255" key="1">
    <source>
        <dbReference type="HAMAP-Rule" id="MF_01368"/>
    </source>
</evidence>
<evidence type="ECO:0000305" key="2"/>
<protein>
    <recommendedName>
        <fullName evidence="1">Large ribosomal subunit protein bL17</fullName>
    </recommendedName>
    <alternativeName>
        <fullName evidence="2">50S ribosomal protein L17</fullName>
    </alternativeName>
</protein>
<name>RL17_BRASO</name>
<feature type="chain" id="PRO_1000055780" description="Large ribosomal subunit protein bL17">
    <location>
        <begin position="1"/>
        <end position="137"/>
    </location>
</feature>
<comment type="subunit">
    <text evidence="1">Part of the 50S ribosomal subunit. Contacts protein L32.</text>
</comment>
<comment type="similarity">
    <text evidence="1">Belongs to the bacterial ribosomal protein bL17 family.</text>
</comment>
<proteinExistence type="inferred from homology"/>
<accession>A4YSL7</accession>
<organism>
    <name type="scientific">Bradyrhizobium sp. (strain ORS 278)</name>
    <dbReference type="NCBI Taxonomy" id="114615"/>
    <lineage>
        <taxon>Bacteria</taxon>
        <taxon>Pseudomonadati</taxon>
        <taxon>Pseudomonadota</taxon>
        <taxon>Alphaproteobacteria</taxon>
        <taxon>Hyphomicrobiales</taxon>
        <taxon>Nitrobacteraceae</taxon>
        <taxon>Bradyrhizobium</taxon>
    </lineage>
</organism>